<reference key="1">
    <citation type="submission" date="2001-09" db="EMBL/GenBank/DDBJ databases">
        <title>Differentiation-inducing factor, NREP, accelerates nerve regeneration.</title>
        <authorList>
            <person name="Che Y."/>
            <person name="Yamashita T."/>
            <person name="Yoshikawa H."/>
            <person name="Tohyama M."/>
        </authorList>
    </citation>
    <scope>NUCLEOTIDE SEQUENCE [MRNA]</scope>
</reference>
<reference key="2">
    <citation type="journal article" date="2004" name="J. Neurochem.">
        <title>P311 accelerates nerve regeneration of the axotomized facial nerve.</title>
        <authorList>
            <person name="Fujitani M."/>
            <person name="Yamagishi S."/>
            <person name="Che Y.H."/>
            <person name="Hata K."/>
            <person name="Kubo T."/>
            <person name="Ino H."/>
            <person name="Tohyama M."/>
            <person name="Yamashita T."/>
        </authorList>
    </citation>
    <scope>FUNCTION</scope>
</reference>
<name>NREP_RAT</name>
<comment type="function">
    <text evidence="1 2">May have roles in neural function. Ectopic expression promotes axonal regeneration. Also augments motility of gliomas (By similarity). May also have roles in cellular differentiation (By similarity). Induces differentiation of fibroblast into myofibroblast and myofibroblast ameboid migration (By similarity). Increases retinoic-acid regulation of lipid-droplet biogenesis (By similarity). Down-regulates the expression of TGFB1 and TGFB2 but not of TGFB3 (By similarity). May play a role in the regulation of alveolar generation (By similarity).</text>
</comment>
<comment type="subunit">
    <text evidence="1">Interacts with FLNA. Interacts with the latency-associated peptides (LAP) of TGFB1 and TGFB2; the interaction results in a decrease in TGFB autoinduction.</text>
</comment>
<comment type="subcellular location">
    <subcellularLocation>
        <location evidence="1">Cytoplasm</location>
    </subcellularLocation>
</comment>
<comment type="PTM">
    <text evidence="1">Phosphorylated on Ser-59. Phosphorylation decreases stability and activity.</text>
</comment>
<keyword id="KW-0963">Cytoplasm</keyword>
<keyword id="KW-0597">Phosphoprotein</keyword>
<keyword id="KW-1185">Reference proteome</keyword>
<organism>
    <name type="scientific">Rattus norvegicus</name>
    <name type="common">Rat</name>
    <dbReference type="NCBI Taxonomy" id="10116"/>
    <lineage>
        <taxon>Eukaryota</taxon>
        <taxon>Metazoa</taxon>
        <taxon>Chordata</taxon>
        <taxon>Craniata</taxon>
        <taxon>Vertebrata</taxon>
        <taxon>Euteleostomi</taxon>
        <taxon>Mammalia</taxon>
        <taxon>Eutheria</taxon>
        <taxon>Euarchontoglires</taxon>
        <taxon>Glires</taxon>
        <taxon>Rodentia</taxon>
        <taxon>Myomorpha</taxon>
        <taxon>Muroidea</taxon>
        <taxon>Muridae</taxon>
        <taxon>Murinae</taxon>
        <taxon>Rattus</taxon>
    </lineage>
</organism>
<dbReference type="EMBL" id="AB072344">
    <property type="protein sequence ID" value="BAC65245.1"/>
    <property type="molecule type" value="mRNA"/>
</dbReference>
<dbReference type="RefSeq" id="NP_001406489.1">
    <property type="nucleotide sequence ID" value="NM_001419560.1"/>
</dbReference>
<dbReference type="RefSeq" id="NP_001406490.1">
    <property type="nucleotide sequence ID" value="NM_001419561.1"/>
</dbReference>
<dbReference type="RefSeq" id="NP_835197.1">
    <property type="nucleotide sequence ID" value="NM_178096.3"/>
</dbReference>
<dbReference type="RefSeq" id="XP_006254657.1">
    <property type="nucleotide sequence ID" value="XM_006254595.2"/>
</dbReference>
<dbReference type="RefSeq" id="XP_063133526.1">
    <property type="nucleotide sequence ID" value="XM_063277456.1"/>
</dbReference>
<dbReference type="RefSeq" id="XP_063133527.1">
    <property type="nucleotide sequence ID" value="XM_063277457.1"/>
</dbReference>
<dbReference type="FunCoup" id="Q80Z34">
    <property type="interactions" value="36"/>
</dbReference>
<dbReference type="STRING" id="10116.ENSRNOP00000027739"/>
<dbReference type="PhosphoSitePlus" id="Q80Z34"/>
<dbReference type="PaxDb" id="10116-ENSRNOP00000027739"/>
<dbReference type="Ensembl" id="ENSRNOT00000119499.1">
    <property type="protein sequence ID" value="ENSRNOP00000086813.1"/>
    <property type="gene ID" value="ENSRNOG00000068914.1"/>
</dbReference>
<dbReference type="GeneID" id="338475"/>
<dbReference type="UCSC" id="RGD:631411">
    <property type="organism name" value="rat"/>
</dbReference>
<dbReference type="AGR" id="RGD:631411"/>
<dbReference type="RGD" id="631411">
    <property type="gene designation" value="Nrep"/>
</dbReference>
<dbReference type="eggNOG" id="ENOG502SFKT">
    <property type="taxonomic scope" value="Eukaryota"/>
</dbReference>
<dbReference type="GeneTree" id="ENSGT00390000016521"/>
<dbReference type="HOGENOM" id="CLU_204758_0_0_1"/>
<dbReference type="InParanoid" id="Q80Z34"/>
<dbReference type="OMA" id="EGRLTEX"/>
<dbReference type="OrthoDB" id="9383199at2759"/>
<dbReference type="PhylomeDB" id="Q80Z34"/>
<dbReference type="TreeFam" id="TF336368"/>
<dbReference type="PRO" id="PR:Q80Z34"/>
<dbReference type="Proteomes" id="UP000002494">
    <property type="component" value="Chromosome 18"/>
</dbReference>
<dbReference type="Bgee" id="ENSRNOG00000020467">
    <property type="expression patterns" value="Expressed in quadriceps femoris and 18 other cell types or tissues"/>
</dbReference>
<dbReference type="GO" id="GO:0005737">
    <property type="term" value="C:cytoplasm"/>
    <property type="evidence" value="ECO:0007669"/>
    <property type="project" value="UniProtKB-SubCell"/>
</dbReference>
<dbReference type="GO" id="GO:0031103">
    <property type="term" value="P:axon regeneration"/>
    <property type="evidence" value="ECO:0000270"/>
    <property type="project" value="RGD"/>
</dbReference>
<dbReference type="GO" id="GO:0045664">
    <property type="term" value="P:regulation of neuron differentiation"/>
    <property type="evidence" value="ECO:0000315"/>
    <property type="project" value="RGD"/>
</dbReference>
<dbReference type="GO" id="GO:0017015">
    <property type="term" value="P:regulation of transforming growth factor beta receptor signaling pathway"/>
    <property type="evidence" value="ECO:0000266"/>
    <property type="project" value="RGD"/>
</dbReference>
<dbReference type="InterPro" id="IPR024417">
    <property type="entry name" value="Neuronal_3.1"/>
</dbReference>
<dbReference type="PANTHER" id="PTHR17102">
    <property type="entry name" value="NEURONAL REGENERATION-RELATED PROTEIN"/>
    <property type="match status" value="1"/>
</dbReference>
<dbReference type="PANTHER" id="PTHR17102:SF4">
    <property type="entry name" value="NEURONAL REGENERATION-RELATED PROTEIN"/>
    <property type="match status" value="1"/>
</dbReference>
<dbReference type="Pfam" id="PF11092">
    <property type="entry name" value="Alveol-reg_P311"/>
    <property type="match status" value="1"/>
</dbReference>
<proteinExistence type="inferred from homology"/>
<evidence type="ECO:0000250" key="1"/>
<evidence type="ECO:0000269" key="2">
    <source>
    </source>
</evidence>
<gene>
    <name type="primary">Nrep</name>
    <name type="synonym">P311</name>
</gene>
<accession>Q80Z34</accession>
<sequence length="68" mass="7648">MVYYPELLVWVSQEPFPYKEMEGGLTKGRLPVPKEVNRKKMDEPIAASLIPPGNHEPGSPAIGYLHPF</sequence>
<feature type="chain" id="PRO_0000253597" description="Neuronal regeneration-related protein">
    <location>
        <begin position="1"/>
        <end position="68"/>
    </location>
</feature>
<protein>
    <recommendedName>
        <fullName>Neuronal regeneration-related protein</fullName>
    </recommendedName>
    <alternativeName>
        <fullName>Neuronal protein 3.1</fullName>
    </alternativeName>
    <alternativeName>
        <fullName>Protein p311</fullName>
    </alternativeName>
</protein>